<organism evidence="11">
    <name type="scientific">Danio rerio</name>
    <name type="common">Zebrafish</name>
    <name type="synonym">Brachydanio rerio</name>
    <dbReference type="NCBI Taxonomy" id="7955"/>
    <lineage>
        <taxon>Eukaryota</taxon>
        <taxon>Metazoa</taxon>
        <taxon>Chordata</taxon>
        <taxon>Craniata</taxon>
        <taxon>Vertebrata</taxon>
        <taxon>Euteleostomi</taxon>
        <taxon>Actinopterygii</taxon>
        <taxon>Neopterygii</taxon>
        <taxon>Teleostei</taxon>
        <taxon>Ostariophysi</taxon>
        <taxon>Cypriniformes</taxon>
        <taxon>Danionidae</taxon>
        <taxon>Danioninae</taxon>
        <taxon>Danio</taxon>
    </lineage>
</organism>
<sequence>MARRISPVVAFLLCFGLSHFFEAEARLQHSVALHRQKREWIVPPQILEENVDYTKKDFIAKIRSDKEVAHMKYLRYSLRGVGADQEPFNLFVVNPETGYVRITGILDRESISQYNLSGIALFTDGSIAENDIGLRIKVKDQNDNAPVFGVMNPGAVDELSAVGTEVMRLNCFDADEPGNPNSQIKYEIVDQQPAGQSMFTVENNRRVVVANPNLDRETVDQYVLLVKASDLNGAPGGNAATGTVTIKINDVNDNVPTLGGPYEASIEENTEKVEVMRLKVSDLHLKGTDNWEGDCYIASGNEAGYFSIHMDPKTNEAVLMLDKAVDYEDVKDLNLGIGVANKAPFHPSVSGGSQGATISFGGSGGGAGSGAAGGAGAMGGASGSGGGTGASSWSSSGVPLYNVNIKVKNQPEGPKFFPGTKAIPISEGKAFDSTEIIARYPAIDTDTGKEATNVKYIKSSDPDNWLTIDEKTGAIRMNKAPDRESKYLVNGTYYAKVLSITQDLPSKTATGTIAIQVEDFNDHCPTLISNVQTLCTDKDAVLVTAKDEDAPPNGAPFDFNIVSEGTAGKWTVEYMNDTTAIFRTHEKLWPGPHELMVEVTDQQGLKCPEPQKLQVDVCTCKNQGGCDRTATGDAKKGSRLGPAGIGLLLLALLALLLIPLLLLLCTCGMTGAFTDMPFETKVHLISSNTEGQGEDRDVPLMCPPSNVDGMGFMTKDYMAVGAMHSAGLGLGVGAGVGAAGFLESTSTMGGRGYNEMELDYMNSIGRNNAYSSRDMAGDFDGMALSDGYLCEYYSQKSRVVDGFGKDDPMVYDYEGKGSPVGSVGCCSLLEDQNDLEFLNDLGPKFTTLADICGGKKTEIPAPAPAPLPPPPKPVVDRSEVVSSTTNILNTGNIATNRVNTVNVASNMATASSTRVENVLVTDNRPTMITSVHPAPTLLVQPQPMYYMVEQQPSTVLVAERPAMTQGMYVLNSGPVAEGMVVQGGNIAANTLTRGERMVLVFRGGPAQALNNGMLHTSNLSGSQLLLVDGGATSGQVLQGTIQRGVAGSQGLMFVDGQGGQVIQGSINNGISTHGGSQNVFYVENKGGSSVVQGGLQMGKASTAGSLIGDVGIGGSSVKITQNPSSHKVVVQERKVVTTQSVK</sequence>
<evidence type="ECO:0000250" key="1">
    <source>
        <dbReference type="UniProtKB" id="Q14126"/>
    </source>
</evidence>
<evidence type="ECO:0000255" key="2"/>
<evidence type="ECO:0000255" key="3">
    <source>
        <dbReference type="PROSITE-ProRule" id="PRU00043"/>
    </source>
</evidence>
<evidence type="ECO:0000255" key="4">
    <source>
        <dbReference type="PROSITE-ProRule" id="PRU00498"/>
    </source>
</evidence>
<evidence type="ECO:0000255" key="5">
    <source>
        <dbReference type="RuleBase" id="RU004358"/>
    </source>
</evidence>
<evidence type="ECO:0000256" key="6">
    <source>
        <dbReference type="SAM" id="MobiDB-lite"/>
    </source>
</evidence>
<evidence type="ECO:0000269" key="7">
    <source>
    </source>
</evidence>
<evidence type="ECO:0000303" key="8">
    <source>
    </source>
</evidence>
<evidence type="ECO:0000305" key="9"/>
<evidence type="ECO:0000312" key="10">
    <source>
        <dbReference type="EMBL" id="AEY64278.1"/>
    </source>
</evidence>
<evidence type="ECO:0000312" key="11">
    <source>
        <dbReference type="Proteomes" id="UP000000437"/>
    </source>
</evidence>
<evidence type="ECO:0000312" key="12">
    <source>
        <dbReference type="ZFIN" id="ZDB-GENE-030131-7531"/>
    </source>
</evidence>
<proteinExistence type="evidence at transcript level"/>
<name>DSG21_DANRE</name>
<keyword id="KW-0106">Calcium</keyword>
<keyword id="KW-0130">Cell adhesion</keyword>
<keyword id="KW-0965">Cell junction</keyword>
<keyword id="KW-1003">Cell membrane</keyword>
<keyword id="KW-0165">Cleavage on pair of basic residues</keyword>
<keyword id="KW-0963">Cytoplasm</keyword>
<keyword id="KW-0325">Glycoprotein</keyword>
<keyword id="KW-0472">Membrane</keyword>
<keyword id="KW-0479">Metal-binding</keyword>
<keyword id="KW-1185">Reference proteome</keyword>
<keyword id="KW-0677">Repeat</keyword>
<keyword id="KW-0732">Signal</keyword>
<keyword id="KW-0812">Transmembrane</keyword>
<keyword id="KW-1133">Transmembrane helix</keyword>
<dbReference type="EMBL" id="JQ013461">
    <property type="protein sequence ID" value="AEY64278.1"/>
    <property type="molecule type" value="mRNA"/>
</dbReference>
<dbReference type="RefSeq" id="NP_001243566.1">
    <property type="nucleotide sequence ID" value="NM_001256637.1"/>
</dbReference>
<dbReference type="SMR" id="H2EQR6"/>
<dbReference type="GeneID" id="560026"/>
<dbReference type="KEGG" id="dre:560026"/>
<dbReference type="AGR" id="ZFIN:ZDB-GENE-030131-7531"/>
<dbReference type="CTD" id="560026"/>
<dbReference type="ZFIN" id="ZDB-GENE-030131-7531">
    <property type="gene designation" value="dsg2.1"/>
</dbReference>
<dbReference type="OrthoDB" id="8961010at2759"/>
<dbReference type="Reactome" id="R-DRE-351906">
    <property type="pathway name" value="Apoptotic cleavage of cell adhesion proteins"/>
</dbReference>
<dbReference type="Reactome" id="R-DRE-6798695">
    <property type="pathway name" value="Neutrophil degranulation"/>
</dbReference>
<dbReference type="Reactome" id="R-DRE-6805567">
    <property type="pathway name" value="Keratinization"/>
</dbReference>
<dbReference type="Reactome" id="R-DRE-6809371">
    <property type="pathway name" value="Formation of the cornified envelope"/>
</dbReference>
<dbReference type="Reactome" id="R-DRE-9013404">
    <property type="pathway name" value="RAC2 GTPase cycle"/>
</dbReference>
<dbReference type="Reactome" id="R-DRE-9013408">
    <property type="pathway name" value="RHOG GTPase cycle"/>
</dbReference>
<dbReference type="Reactome" id="R-DRE-9696264">
    <property type="pathway name" value="RND3 GTPase cycle"/>
</dbReference>
<dbReference type="Reactome" id="R-DRE-9696270">
    <property type="pathway name" value="RND2 GTPase cycle"/>
</dbReference>
<dbReference type="PRO" id="PR:H2EQR6"/>
<dbReference type="Proteomes" id="UP000000437">
    <property type="component" value="Chromosome 20"/>
</dbReference>
<dbReference type="GO" id="GO:0005737">
    <property type="term" value="C:cytoplasm"/>
    <property type="evidence" value="ECO:0007669"/>
    <property type="project" value="UniProtKB-SubCell"/>
</dbReference>
<dbReference type="GO" id="GO:0030057">
    <property type="term" value="C:desmosome"/>
    <property type="evidence" value="ECO:0000318"/>
    <property type="project" value="GO_Central"/>
</dbReference>
<dbReference type="GO" id="GO:0005886">
    <property type="term" value="C:plasma membrane"/>
    <property type="evidence" value="ECO:0007669"/>
    <property type="project" value="UniProtKB-SubCell"/>
</dbReference>
<dbReference type="GO" id="GO:0005509">
    <property type="term" value="F:calcium ion binding"/>
    <property type="evidence" value="ECO:0000318"/>
    <property type="project" value="GO_Central"/>
</dbReference>
<dbReference type="GO" id="GO:0098609">
    <property type="term" value="P:cell-cell adhesion"/>
    <property type="evidence" value="ECO:0000318"/>
    <property type="project" value="GO_Central"/>
</dbReference>
<dbReference type="GO" id="GO:0060027">
    <property type="term" value="P:convergent extension involved in gastrulation"/>
    <property type="evidence" value="ECO:0000315"/>
    <property type="project" value="ZFIN"/>
</dbReference>
<dbReference type="GO" id="GO:0002159">
    <property type="term" value="P:desmosome assembly"/>
    <property type="evidence" value="ECO:0000315"/>
    <property type="project" value="ZFIN"/>
</dbReference>
<dbReference type="GO" id="GO:0055113">
    <property type="term" value="P:epiboly involved in gastrulation with mouth forming second"/>
    <property type="evidence" value="ECO:0000315"/>
    <property type="project" value="ZFIN"/>
</dbReference>
<dbReference type="GO" id="GO:0007156">
    <property type="term" value="P:homophilic cell adhesion via plasma membrane adhesion molecules"/>
    <property type="evidence" value="ECO:0007669"/>
    <property type="project" value="InterPro"/>
</dbReference>
<dbReference type="CDD" id="cd11304">
    <property type="entry name" value="Cadherin_repeat"/>
    <property type="match status" value="3"/>
</dbReference>
<dbReference type="FunFam" id="2.60.40.60:FF:000011">
    <property type="entry name" value="Cadherin 1"/>
    <property type="match status" value="1"/>
</dbReference>
<dbReference type="FunFam" id="2.60.40.60:FF:000019">
    <property type="entry name" value="Cadherin 2"/>
    <property type="match status" value="1"/>
</dbReference>
<dbReference type="FunFam" id="2.60.40.60:FF:000031">
    <property type="entry name" value="Cadherin 3"/>
    <property type="match status" value="1"/>
</dbReference>
<dbReference type="FunFam" id="2.60.40.60:FF:000068">
    <property type="entry name" value="Desmoglein 1"/>
    <property type="match status" value="1"/>
</dbReference>
<dbReference type="FunFam" id="4.10.900.10:FF:000003">
    <property type="entry name" value="Desmoglein 1"/>
    <property type="match status" value="1"/>
</dbReference>
<dbReference type="FunFam" id="2.60.40.60:FF:000074">
    <property type="entry name" value="Desmoglein 4"/>
    <property type="match status" value="1"/>
</dbReference>
<dbReference type="Gene3D" id="2.60.40.60">
    <property type="entry name" value="Cadherins"/>
    <property type="match status" value="5"/>
</dbReference>
<dbReference type="Gene3D" id="4.10.900.10">
    <property type="entry name" value="TCF3-CBD (Catenin binding domain)"/>
    <property type="match status" value="1"/>
</dbReference>
<dbReference type="InterPro" id="IPR050971">
    <property type="entry name" value="Cadherin-domain_protein"/>
</dbReference>
<dbReference type="InterPro" id="IPR002126">
    <property type="entry name" value="Cadherin-like_dom"/>
</dbReference>
<dbReference type="InterPro" id="IPR015919">
    <property type="entry name" value="Cadherin-like_sf"/>
</dbReference>
<dbReference type="InterPro" id="IPR020894">
    <property type="entry name" value="Cadherin_CS"/>
</dbReference>
<dbReference type="InterPro" id="IPR000233">
    <property type="entry name" value="Cadherin_Y-type_LIR"/>
</dbReference>
<dbReference type="InterPro" id="IPR027397">
    <property type="entry name" value="Catenin-bd_sf"/>
</dbReference>
<dbReference type="InterPro" id="IPR009122">
    <property type="entry name" value="Desmosomal_cadherin"/>
</dbReference>
<dbReference type="PANTHER" id="PTHR24025">
    <property type="entry name" value="DESMOGLEIN FAMILY MEMBER"/>
    <property type="match status" value="1"/>
</dbReference>
<dbReference type="PANTHER" id="PTHR24025:SF29">
    <property type="entry name" value="DESMOGLEIN-2-LIKE-RELATED"/>
    <property type="match status" value="1"/>
</dbReference>
<dbReference type="Pfam" id="PF01049">
    <property type="entry name" value="CADH_Y-type_LIR"/>
    <property type="match status" value="1"/>
</dbReference>
<dbReference type="Pfam" id="PF00028">
    <property type="entry name" value="Cadherin"/>
    <property type="match status" value="2"/>
</dbReference>
<dbReference type="PRINTS" id="PR00205">
    <property type="entry name" value="CADHERIN"/>
</dbReference>
<dbReference type="PRINTS" id="PR01818">
    <property type="entry name" value="DESMOCADHERN"/>
</dbReference>
<dbReference type="SMART" id="SM00112">
    <property type="entry name" value="CA"/>
    <property type="match status" value="3"/>
</dbReference>
<dbReference type="SUPFAM" id="SSF49313">
    <property type="entry name" value="Cadherin-like"/>
    <property type="match status" value="5"/>
</dbReference>
<dbReference type="PROSITE" id="PS00232">
    <property type="entry name" value="CADHERIN_1"/>
    <property type="match status" value="3"/>
</dbReference>
<dbReference type="PROSITE" id="PS50268">
    <property type="entry name" value="CADHERIN_2"/>
    <property type="match status" value="3"/>
</dbReference>
<reference evidence="10" key="1">
    <citation type="journal article" date="2012" name="BMC Dev. Biol.">
        <title>Desmosomal cadherins in zebrafish epiboly and gastrulation.</title>
        <authorList>
            <person name="Goonesinghe A."/>
            <person name="Luan X.M."/>
            <person name="Hurlstone A."/>
            <person name="Garrod D."/>
        </authorList>
    </citation>
    <scope>NUCLEOTIDE SEQUENCE [MRNA]</scope>
    <scope>FUNCTION</scope>
    <scope>DEVELOPMENTAL STAGE</scope>
    <scope>DISRUPTION PHENOTYPE</scope>
</reference>
<reference key="2">
    <citation type="journal article" date="2013" name="Nature">
        <title>The zebrafish reference genome sequence and its relationship to the human genome.</title>
        <authorList>
            <person name="Howe K."/>
            <person name="Clark M.D."/>
            <person name="Torroja C.F."/>
            <person name="Torrance J."/>
            <person name="Berthelot C."/>
            <person name="Muffato M."/>
            <person name="Collins J.E."/>
            <person name="Humphray S."/>
            <person name="McLaren K."/>
            <person name="Matthews L."/>
            <person name="McLaren S."/>
            <person name="Sealy I."/>
            <person name="Caccamo M."/>
            <person name="Churcher C."/>
            <person name="Scott C."/>
            <person name="Barrett J.C."/>
            <person name="Koch R."/>
            <person name="Rauch G.J."/>
            <person name="White S."/>
            <person name="Chow W."/>
            <person name="Kilian B."/>
            <person name="Quintais L.T."/>
            <person name="Guerra-Assuncao J.A."/>
            <person name="Zhou Y."/>
            <person name="Gu Y."/>
            <person name="Yen J."/>
            <person name="Vogel J.H."/>
            <person name="Eyre T."/>
            <person name="Redmond S."/>
            <person name="Banerjee R."/>
            <person name="Chi J."/>
            <person name="Fu B."/>
            <person name="Langley E."/>
            <person name="Maguire S.F."/>
            <person name="Laird G.K."/>
            <person name="Lloyd D."/>
            <person name="Kenyon E."/>
            <person name="Donaldson S."/>
            <person name="Sehra H."/>
            <person name="Almeida-King J."/>
            <person name="Loveland J."/>
            <person name="Trevanion S."/>
            <person name="Jones M."/>
            <person name="Quail M."/>
            <person name="Willey D."/>
            <person name="Hunt A."/>
            <person name="Burton J."/>
            <person name="Sims S."/>
            <person name="McLay K."/>
            <person name="Plumb B."/>
            <person name="Davis J."/>
            <person name="Clee C."/>
            <person name="Oliver K."/>
            <person name="Clark R."/>
            <person name="Riddle C."/>
            <person name="Elliot D."/>
            <person name="Threadgold G."/>
            <person name="Harden G."/>
            <person name="Ware D."/>
            <person name="Begum S."/>
            <person name="Mortimore B."/>
            <person name="Kerry G."/>
            <person name="Heath P."/>
            <person name="Phillimore B."/>
            <person name="Tracey A."/>
            <person name="Corby N."/>
            <person name="Dunn M."/>
            <person name="Johnson C."/>
            <person name="Wood J."/>
            <person name="Clark S."/>
            <person name="Pelan S."/>
            <person name="Griffiths G."/>
            <person name="Smith M."/>
            <person name="Glithero R."/>
            <person name="Howden P."/>
            <person name="Barker N."/>
            <person name="Lloyd C."/>
            <person name="Stevens C."/>
            <person name="Harley J."/>
            <person name="Holt K."/>
            <person name="Panagiotidis G."/>
            <person name="Lovell J."/>
            <person name="Beasley H."/>
            <person name="Henderson C."/>
            <person name="Gordon D."/>
            <person name="Auger K."/>
            <person name="Wright D."/>
            <person name="Collins J."/>
            <person name="Raisen C."/>
            <person name="Dyer L."/>
            <person name="Leung K."/>
            <person name="Robertson L."/>
            <person name="Ambridge K."/>
            <person name="Leongamornlert D."/>
            <person name="McGuire S."/>
            <person name="Gilderthorp R."/>
            <person name="Griffiths C."/>
            <person name="Manthravadi D."/>
            <person name="Nichol S."/>
            <person name="Barker G."/>
            <person name="Whitehead S."/>
            <person name="Kay M."/>
            <person name="Brown J."/>
            <person name="Murnane C."/>
            <person name="Gray E."/>
            <person name="Humphries M."/>
            <person name="Sycamore N."/>
            <person name="Barker D."/>
            <person name="Saunders D."/>
            <person name="Wallis J."/>
            <person name="Babbage A."/>
            <person name="Hammond S."/>
            <person name="Mashreghi-Mohammadi M."/>
            <person name="Barr L."/>
            <person name="Martin S."/>
            <person name="Wray P."/>
            <person name="Ellington A."/>
            <person name="Matthews N."/>
            <person name="Ellwood M."/>
            <person name="Woodmansey R."/>
            <person name="Clark G."/>
            <person name="Cooper J."/>
            <person name="Tromans A."/>
            <person name="Grafham D."/>
            <person name="Skuce C."/>
            <person name="Pandian R."/>
            <person name="Andrews R."/>
            <person name="Harrison E."/>
            <person name="Kimberley A."/>
            <person name="Garnett J."/>
            <person name="Fosker N."/>
            <person name="Hall R."/>
            <person name="Garner P."/>
            <person name="Kelly D."/>
            <person name="Bird C."/>
            <person name="Palmer S."/>
            <person name="Gehring I."/>
            <person name="Berger A."/>
            <person name="Dooley C.M."/>
            <person name="Ersan-Urun Z."/>
            <person name="Eser C."/>
            <person name="Geiger H."/>
            <person name="Geisler M."/>
            <person name="Karotki L."/>
            <person name="Kirn A."/>
            <person name="Konantz J."/>
            <person name="Konantz M."/>
            <person name="Oberlander M."/>
            <person name="Rudolph-Geiger S."/>
            <person name="Teucke M."/>
            <person name="Lanz C."/>
            <person name="Raddatz G."/>
            <person name="Osoegawa K."/>
            <person name="Zhu B."/>
            <person name="Rapp A."/>
            <person name="Widaa S."/>
            <person name="Langford C."/>
            <person name="Yang F."/>
            <person name="Schuster S.C."/>
            <person name="Carter N.P."/>
            <person name="Harrow J."/>
            <person name="Ning Z."/>
            <person name="Herrero J."/>
            <person name="Searle S.M."/>
            <person name="Enright A."/>
            <person name="Geisler R."/>
            <person name="Plasterk R.H."/>
            <person name="Lee C."/>
            <person name="Westerfield M."/>
            <person name="de Jong P.J."/>
            <person name="Zon L.I."/>
            <person name="Postlethwait J.H."/>
            <person name="Nusslein-Volhard C."/>
            <person name="Hubbard T.J."/>
            <person name="Roest Crollius H."/>
            <person name="Rogers J."/>
            <person name="Stemple D.L."/>
        </authorList>
    </citation>
    <scope>NUCLEOTIDE SEQUENCE [LARGE SCALE GENOMIC DNA]</scope>
    <source>
        <strain>Tuebingen</strain>
    </source>
</reference>
<comment type="function">
    <text evidence="1 5 7">A component of desmosome cell-cell junctions which are required for positive regulation of cellular adhesion (By similarity). Involved in the interaction of plaque proteins and intermediate filaments mediating cell-cell adhesion (By similarity). Required for embryogenesis, specifically for progression of epiboly and normal convergence-extension movements during gastrulation (PubMed:22235774).</text>
</comment>
<comment type="subcellular location">
    <subcellularLocation>
        <location evidence="1">Cell junction</location>
        <location evidence="1">Desmosome</location>
    </subcellularLocation>
    <subcellularLocation>
        <location evidence="2">Cell membrane</location>
        <topology evidence="2">Single-pass type I membrane protein</topology>
    </subcellularLocation>
    <subcellularLocation>
        <location evidence="1">Cytoplasm</location>
    </subcellularLocation>
</comment>
<comment type="developmental stage">
    <text evidence="7">Expressed at fertilization and up to 2 hours post-fertilization (hpf), expression then declines to low levels at 4 hpf before increasing at 6 hpf onwards until 96 hpf.</text>
</comment>
<comment type="domain">
    <text evidence="9">Three calcium ions are usually bound at the interface of each cadherin domain and rigidify the connections, imparting a strong curvature to the full-length ectodomain.</text>
</comment>
<comment type="disruption phenotype">
    <text evidence="7">Morpholino knockdowns show increased embryonic lethality, with embryos that die developing one of two clear phenotypes following developmental arrest at 10 hpf (PubMed:22235774). The first group show severe epiboly arrest with the desmosomal cadherins and enveloping layer becoming detached from the external yolk syncytial layer that continues to undergo epiboly (PubMed:22235774). This results in a population of cells at the animal pole which maintain cell division and some gastrulation movements (PubMed:22235774). In the second phenotype the enveloping layer is attached to the yolk but does not progress through epiboly (PubMed:22235774). The enveloping layer remains attached in a ring to the base of the blastoderm until embryos arrest due to mechanical stress and detachment of the blastoderm from the yolk cell following extensive proliferation and blastoderm growth (PubMed:22235774). Embryos that survive to 14 hpf show morphological defects characteristic of altered gastrulation movements including a shorter embryonic axis, undulating notochord and somites that show either altered morphology or substantial disorganization (PubMed:22235774).</text>
</comment>
<gene>
    <name evidence="12" type="primary">dsg2.1</name>
    <name evidence="12" type="synonym">dsg2</name>
    <name evidence="8" type="synonym">dsga</name>
</gene>
<feature type="signal peptide" evidence="9">
    <location>
        <begin position="1"/>
        <end position="18"/>
    </location>
</feature>
<feature type="propeptide" id="PRO_0000457078" evidence="9">
    <location>
        <begin position="19"/>
        <end position="38"/>
    </location>
</feature>
<feature type="chain" id="PRO_5003561369" description="Desmoglein-2.1">
    <location>
        <begin position="39"/>
        <end position="1142"/>
    </location>
</feature>
<feature type="topological domain" description="Extracellular" evidence="2">
    <location>
        <begin position="39"/>
        <end position="643"/>
    </location>
</feature>
<feature type="transmembrane region" description="Helical" evidence="2">
    <location>
        <begin position="644"/>
        <end position="664"/>
    </location>
</feature>
<feature type="topological domain" description="Cytoplasmic" evidence="2">
    <location>
        <begin position="665"/>
        <end position="1142"/>
    </location>
</feature>
<feature type="domain" description="Cadherin 1" evidence="3">
    <location>
        <begin position="64"/>
        <end position="148"/>
    </location>
</feature>
<feature type="domain" description="Cadherin 2" evidence="3">
    <location>
        <begin position="156"/>
        <end position="258"/>
    </location>
</feature>
<feature type="domain" description="Cadherin 3" evidence="3">
    <location>
        <begin position="259"/>
        <end position="416"/>
    </location>
</feature>
<feature type="domain" description="Cadherin 4" evidence="3">
    <location>
        <begin position="417"/>
        <end position="527"/>
    </location>
</feature>
<feature type="repeat" description="Desmoglein repeat 1" evidence="9">
    <location>
        <begin position="948"/>
        <end position="974"/>
    </location>
</feature>
<feature type="repeat" description="Desmoglein repeat 2" evidence="9">
    <location>
        <begin position="975"/>
        <end position="998"/>
    </location>
</feature>
<feature type="repeat" description="Desmoglein repeat 3" evidence="9">
    <location>
        <begin position="999"/>
        <end position="1039"/>
    </location>
</feature>
<feature type="repeat" description="Desmoglein repeat 4" evidence="9">
    <location>
        <begin position="1040"/>
        <end position="1071"/>
    </location>
</feature>
<feature type="region of interest" description="Disordered" evidence="6">
    <location>
        <begin position="369"/>
        <end position="389"/>
    </location>
</feature>
<feature type="glycosylation site" description="N-linked (GlcNAc...) asparagine" evidence="4">
    <location>
        <position position="115"/>
    </location>
</feature>
<feature type="glycosylation site" description="N-linked (GlcNAc...) asparagine" evidence="4">
    <location>
        <position position="490"/>
    </location>
</feature>
<feature type="glycosylation site" description="N-linked (GlcNAc...) asparagine" evidence="4">
    <location>
        <position position="576"/>
    </location>
</feature>
<protein>
    <recommendedName>
        <fullName evidence="12">Desmoglein-2.1</fullName>
    </recommendedName>
</protein>
<accession>H2EQR6</accession>